<organism>
    <name type="scientific">Chara vulgaris</name>
    <name type="common">Common stonewort</name>
    <dbReference type="NCBI Taxonomy" id="55564"/>
    <lineage>
        <taxon>Eukaryota</taxon>
        <taxon>Viridiplantae</taxon>
        <taxon>Streptophyta</taxon>
        <taxon>Charophyceae</taxon>
        <taxon>Charales</taxon>
        <taxon>Characeae</taxon>
        <taxon>Chara</taxon>
    </lineage>
</organism>
<proteinExistence type="inferred from homology"/>
<protein>
    <recommendedName>
        <fullName evidence="1">NAD(P)H-quinone oxidoreductase subunit I, chloroplastic</fullName>
        <ecNumber evidence="1">7.1.1.-</ecNumber>
    </recommendedName>
    <alternativeName>
        <fullName evidence="1">NAD(P)H dehydrogenase subunit I</fullName>
        <shortName evidence="1">NDH subunit I</shortName>
    </alternativeName>
    <alternativeName>
        <fullName evidence="1">NADH-plastoquinone oxidoreductase subunit I</fullName>
    </alternativeName>
</protein>
<geneLocation type="chloroplast"/>
<accession>Q1ACE5</accession>
<evidence type="ECO:0000255" key="1">
    <source>
        <dbReference type="HAMAP-Rule" id="MF_01351"/>
    </source>
</evidence>
<reference key="1">
    <citation type="journal article" date="2006" name="Mol. Biol. Evol.">
        <title>The chloroplast genome sequence of Chara vulgaris sheds new light into the closest green algal relatives of land plants.</title>
        <authorList>
            <person name="Turmel M."/>
            <person name="Otis C."/>
            <person name="Lemieux C."/>
        </authorList>
    </citation>
    <scope>NUCLEOTIDE SEQUENCE [LARGE SCALE GENOMIC DNA]</scope>
</reference>
<feature type="chain" id="PRO_0000250766" description="NAD(P)H-quinone oxidoreductase subunit I, chloroplastic">
    <location>
        <begin position="1"/>
        <end position="159"/>
    </location>
</feature>
<feature type="domain" description="4Fe-4S ferredoxin-type 1" evidence="1">
    <location>
        <begin position="55"/>
        <end position="84"/>
    </location>
</feature>
<feature type="domain" description="4Fe-4S ferredoxin-type 2" evidence="1">
    <location>
        <begin position="95"/>
        <end position="124"/>
    </location>
</feature>
<feature type="binding site" evidence="1">
    <location>
        <position position="64"/>
    </location>
    <ligand>
        <name>[4Fe-4S] cluster</name>
        <dbReference type="ChEBI" id="CHEBI:49883"/>
        <label>1</label>
    </ligand>
</feature>
<feature type="binding site" evidence="1">
    <location>
        <position position="67"/>
    </location>
    <ligand>
        <name>[4Fe-4S] cluster</name>
        <dbReference type="ChEBI" id="CHEBI:49883"/>
        <label>1</label>
    </ligand>
</feature>
<feature type="binding site" evidence="1">
    <location>
        <position position="70"/>
    </location>
    <ligand>
        <name>[4Fe-4S] cluster</name>
        <dbReference type="ChEBI" id="CHEBI:49883"/>
        <label>1</label>
    </ligand>
</feature>
<feature type="binding site" evidence="1">
    <location>
        <position position="74"/>
    </location>
    <ligand>
        <name>[4Fe-4S] cluster</name>
        <dbReference type="ChEBI" id="CHEBI:49883"/>
        <label>2</label>
    </ligand>
</feature>
<feature type="binding site" evidence="1">
    <location>
        <position position="104"/>
    </location>
    <ligand>
        <name>[4Fe-4S] cluster</name>
        <dbReference type="ChEBI" id="CHEBI:49883"/>
        <label>2</label>
    </ligand>
</feature>
<feature type="binding site" evidence="1">
    <location>
        <position position="107"/>
    </location>
    <ligand>
        <name>[4Fe-4S] cluster</name>
        <dbReference type="ChEBI" id="CHEBI:49883"/>
        <label>2</label>
    </ligand>
</feature>
<feature type="binding site" evidence="1">
    <location>
        <position position="110"/>
    </location>
    <ligand>
        <name>[4Fe-4S] cluster</name>
        <dbReference type="ChEBI" id="CHEBI:49883"/>
        <label>2</label>
    </ligand>
</feature>
<feature type="binding site" evidence="1">
    <location>
        <position position="114"/>
    </location>
    <ligand>
        <name>[4Fe-4S] cluster</name>
        <dbReference type="ChEBI" id="CHEBI:49883"/>
        <label>1</label>
    </ligand>
</feature>
<comment type="function">
    <text evidence="1">NDH shuttles electrons from NAD(P)H:plastoquinone, via FMN and iron-sulfur (Fe-S) centers, to quinones in the photosynthetic chain and possibly in a chloroplast respiratory chain. The immediate electron acceptor for the enzyme in this species is believed to be plastoquinone. Couples the redox reaction to proton translocation, and thus conserves the redox energy in a proton gradient.</text>
</comment>
<comment type="catalytic activity">
    <reaction evidence="1">
        <text>a plastoquinone + NADH + (n+1) H(+)(in) = a plastoquinol + NAD(+) + n H(+)(out)</text>
        <dbReference type="Rhea" id="RHEA:42608"/>
        <dbReference type="Rhea" id="RHEA-COMP:9561"/>
        <dbReference type="Rhea" id="RHEA-COMP:9562"/>
        <dbReference type="ChEBI" id="CHEBI:15378"/>
        <dbReference type="ChEBI" id="CHEBI:17757"/>
        <dbReference type="ChEBI" id="CHEBI:57540"/>
        <dbReference type="ChEBI" id="CHEBI:57945"/>
        <dbReference type="ChEBI" id="CHEBI:62192"/>
    </reaction>
</comment>
<comment type="catalytic activity">
    <reaction evidence="1">
        <text>a plastoquinone + NADPH + (n+1) H(+)(in) = a plastoquinol + NADP(+) + n H(+)(out)</text>
        <dbReference type="Rhea" id="RHEA:42612"/>
        <dbReference type="Rhea" id="RHEA-COMP:9561"/>
        <dbReference type="Rhea" id="RHEA-COMP:9562"/>
        <dbReference type="ChEBI" id="CHEBI:15378"/>
        <dbReference type="ChEBI" id="CHEBI:17757"/>
        <dbReference type="ChEBI" id="CHEBI:57783"/>
        <dbReference type="ChEBI" id="CHEBI:58349"/>
        <dbReference type="ChEBI" id="CHEBI:62192"/>
    </reaction>
</comment>
<comment type="cofactor">
    <cofactor evidence="1">
        <name>[4Fe-4S] cluster</name>
        <dbReference type="ChEBI" id="CHEBI:49883"/>
    </cofactor>
    <text evidence="1">Binds 2 [4Fe-4S] clusters per subunit.</text>
</comment>
<comment type="subunit">
    <text evidence="1">NDH is composed of at least 16 different subunits, 5 of which are encoded in the nucleus.</text>
</comment>
<comment type="subcellular location">
    <subcellularLocation>
        <location evidence="1">Plastid</location>
        <location evidence="1">Chloroplast thylakoid membrane</location>
        <topology evidence="1">Peripheral membrane protein</topology>
    </subcellularLocation>
</comment>
<comment type="similarity">
    <text evidence="1">Belongs to the complex I 23 kDa subunit family.</text>
</comment>
<name>NDHI_CHAVU</name>
<keyword id="KW-0004">4Fe-4S</keyword>
<keyword id="KW-0150">Chloroplast</keyword>
<keyword id="KW-0408">Iron</keyword>
<keyword id="KW-0411">Iron-sulfur</keyword>
<keyword id="KW-0472">Membrane</keyword>
<keyword id="KW-0479">Metal-binding</keyword>
<keyword id="KW-0520">NAD</keyword>
<keyword id="KW-0521">NADP</keyword>
<keyword id="KW-0934">Plastid</keyword>
<keyword id="KW-0618">Plastoquinone</keyword>
<keyword id="KW-0874">Quinone</keyword>
<keyword id="KW-0677">Repeat</keyword>
<keyword id="KW-0793">Thylakoid</keyword>
<keyword id="KW-1278">Translocase</keyword>
<dbReference type="EC" id="7.1.1.-" evidence="1"/>
<dbReference type="EMBL" id="DQ229107">
    <property type="protein sequence ID" value="ABA61901.1"/>
    <property type="molecule type" value="Genomic_DNA"/>
</dbReference>
<dbReference type="RefSeq" id="YP_635802.1">
    <property type="nucleotide sequence ID" value="NC_008097.1"/>
</dbReference>
<dbReference type="SMR" id="Q1ACE5"/>
<dbReference type="GeneID" id="4100271"/>
<dbReference type="GO" id="GO:0009535">
    <property type="term" value="C:chloroplast thylakoid membrane"/>
    <property type="evidence" value="ECO:0007669"/>
    <property type="project" value="UniProtKB-SubCell"/>
</dbReference>
<dbReference type="GO" id="GO:0051539">
    <property type="term" value="F:4 iron, 4 sulfur cluster binding"/>
    <property type="evidence" value="ECO:0007669"/>
    <property type="project" value="UniProtKB-KW"/>
</dbReference>
<dbReference type="GO" id="GO:0005506">
    <property type="term" value="F:iron ion binding"/>
    <property type="evidence" value="ECO:0007669"/>
    <property type="project" value="UniProtKB-UniRule"/>
</dbReference>
<dbReference type="GO" id="GO:0008137">
    <property type="term" value="F:NADH dehydrogenase (ubiquinone) activity"/>
    <property type="evidence" value="ECO:0007669"/>
    <property type="project" value="InterPro"/>
</dbReference>
<dbReference type="GO" id="GO:0048038">
    <property type="term" value="F:quinone binding"/>
    <property type="evidence" value="ECO:0007669"/>
    <property type="project" value="UniProtKB-KW"/>
</dbReference>
<dbReference type="GO" id="GO:0019684">
    <property type="term" value="P:photosynthesis, light reaction"/>
    <property type="evidence" value="ECO:0007669"/>
    <property type="project" value="UniProtKB-UniRule"/>
</dbReference>
<dbReference type="Gene3D" id="3.30.70.3270">
    <property type="match status" value="1"/>
</dbReference>
<dbReference type="HAMAP" id="MF_01351">
    <property type="entry name" value="NDH1_NuoI"/>
    <property type="match status" value="1"/>
</dbReference>
<dbReference type="InterPro" id="IPR017896">
    <property type="entry name" value="4Fe4S_Fe-S-bd"/>
</dbReference>
<dbReference type="InterPro" id="IPR017900">
    <property type="entry name" value="4Fe4S_Fe_S_CS"/>
</dbReference>
<dbReference type="InterPro" id="IPR010226">
    <property type="entry name" value="NADH_quinone_OxRdtase_chainI"/>
</dbReference>
<dbReference type="InterPro" id="IPR004497">
    <property type="entry name" value="NDHI"/>
</dbReference>
<dbReference type="NCBIfam" id="TIGR00403">
    <property type="entry name" value="ndhI"/>
    <property type="match status" value="1"/>
</dbReference>
<dbReference type="NCBIfam" id="TIGR01971">
    <property type="entry name" value="NuoI"/>
    <property type="match status" value="1"/>
</dbReference>
<dbReference type="NCBIfam" id="NF004537">
    <property type="entry name" value="PRK05888.1-3"/>
    <property type="match status" value="1"/>
</dbReference>
<dbReference type="PANTHER" id="PTHR47275">
    <property type="entry name" value="NAD(P)H-QUINONE OXIDOREDUCTASE SUBUNIT I, CHLOROPLASTIC"/>
    <property type="match status" value="1"/>
</dbReference>
<dbReference type="PANTHER" id="PTHR47275:SF1">
    <property type="entry name" value="NAD(P)H-QUINONE OXIDOREDUCTASE SUBUNIT I, CHLOROPLASTIC"/>
    <property type="match status" value="1"/>
</dbReference>
<dbReference type="Pfam" id="PF12838">
    <property type="entry name" value="Fer4_7"/>
    <property type="match status" value="1"/>
</dbReference>
<dbReference type="SUPFAM" id="SSF54862">
    <property type="entry name" value="4Fe-4S ferredoxins"/>
    <property type="match status" value="1"/>
</dbReference>
<dbReference type="PROSITE" id="PS00198">
    <property type="entry name" value="4FE4S_FER_1"/>
    <property type="match status" value="2"/>
</dbReference>
<dbReference type="PROSITE" id="PS51379">
    <property type="entry name" value="4FE4S_FER_2"/>
    <property type="match status" value="2"/>
</dbReference>
<gene>
    <name evidence="1" type="primary">ndhI</name>
</gene>
<sequence length="159" mass="18628">MFNFINSLKNYSQESFRAARYIGQGFIVTLNHINRSAITVQYPYEKLITSERFRGRIHFEFDKCIVCEVCVRVCPINLPVVDWNFQQDIRKKKLKNYSIDFGVCIFCGNCVEYCPTNCLSMTEEYELSVYDRHELNYDQIALGRLPFNSFQDALVTKAS</sequence>